<feature type="signal peptide" evidence="2">
    <location>
        <begin position="1"/>
        <end position="16"/>
    </location>
</feature>
<feature type="chain" id="PRO_0000433293" description="Receptor-type guanylate cyclase gcy-25" evidence="2">
    <location>
        <begin position="17"/>
        <end position="1034"/>
    </location>
</feature>
<feature type="topological domain" description="Extracellular" evidence="2">
    <location>
        <begin position="17"/>
        <end position="409"/>
    </location>
</feature>
<feature type="transmembrane region" description="Helical" evidence="2">
    <location>
        <begin position="410"/>
        <end position="430"/>
    </location>
</feature>
<feature type="topological domain" description="Cytoplasmic" evidence="2">
    <location>
        <begin position="431"/>
        <end position="1034"/>
    </location>
</feature>
<feature type="domain" description="Protein kinase" evidence="4">
    <location>
        <begin position="464"/>
        <end position="749"/>
    </location>
</feature>
<feature type="domain" description="Guanylate cyclase" evidence="3">
    <location>
        <begin position="821"/>
        <end position="951"/>
    </location>
</feature>
<feature type="coiled-coil region" evidence="2">
    <location>
        <begin position="758"/>
        <end position="785"/>
    </location>
</feature>
<feature type="binding site" evidence="4">
    <location>
        <begin position="470"/>
        <end position="478"/>
    </location>
    <ligand>
        <name>ATP</name>
        <dbReference type="ChEBI" id="CHEBI:30616"/>
    </ligand>
</feature>
<feature type="binding site" evidence="4">
    <location>
        <position position="497"/>
    </location>
    <ligand>
        <name>ATP</name>
        <dbReference type="ChEBI" id="CHEBI:30616"/>
    </ligand>
</feature>
<feature type="glycosylation site" description="N-linked (GlcNAc...) asparagine" evidence="5">
    <location>
        <position position="28"/>
    </location>
</feature>
<feature type="glycosylation site" description="N-linked (GlcNAc...) asparagine" evidence="5">
    <location>
        <position position="224"/>
    </location>
</feature>
<feature type="glycosylation site" description="N-linked (GlcNAc...) asparagine" evidence="5">
    <location>
        <position position="301"/>
    </location>
</feature>
<feature type="glycosylation site" description="N-linked (GlcNAc...) asparagine" evidence="5">
    <location>
        <position position="308"/>
    </location>
</feature>
<feature type="glycosylation site" description="N-linked (GlcNAc...) asparagine" evidence="5">
    <location>
        <position position="373"/>
    </location>
</feature>
<feature type="splice variant" id="VSP_057708" description="In isoform b." evidence="7">
    <location>
        <begin position="641"/>
        <end position="693"/>
    </location>
</feature>
<reference evidence="8" key="1">
    <citation type="journal article" date="1998" name="Science">
        <title>Genome sequence of the nematode C. elegans: a platform for investigating biology.</title>
        <authorList>
            <consortium name="The C. elegans sequencing consortium"/>
        </authorList>
    </citation>
    <scope>NUCLEOTIDE SEQUENCE [LARGE SCALE GENOMIC DNA]</scope>
    <source>
        <strain evidence="8">Bristol N2</strain>
    </source>
</reference>
<reference evidence="7" key="2">
    <citation type="journal article" date="2006" name="Genetics">
        <title>Searching for neuronal left/right asymmetry: genomewide analysis of nematode receptor-type guanylyl cyclases.</title>
        <authorList>
            <person name="Ortiz C.O."/>
            <person name="Etchberger J.F."/>
            <person name="Posy S.L."/>
            <person name="Frokjaer-Jensen C."/>
            <person name="Lockery S."/>
            <person name="Honig B."/>
            <person name="Hobert O."/>
        </authorList>
    </citation>
    <scope>TISSUE SPECIFICITY</scope>
</reference>
<protein>
    <recommendedName>
        <fullName evidence="7">Receptor-type guanylate cyclase gcy-25</fullName>
        <ecNumber evidence="1">4.6.1.2</ecNumber>
    </recommendedName>
</protein>
<proteinExistence type="evidence at transcript level"/>
<organism evidence="8">
    <name type="scientific">Caenorhabditis elegans</name>
    <dbReference type="NCBI Taxonomy" id="6239"/>
    <lineage>
        <taxon>Eukaryota</taxon>
        <taxon>Metazoa</taxon>
        <taxon>Ecdysozoa</taxon>
        <taxon>Nematoda</taxon>
        <taxon>Chromadorea</taxon>
        <taxon>Rhabditida</taxon>
        <taxon>Rhabditina</taxon>
        <taxon>Rhabditomorpha</taxon>
        <taxon>Rhabditoidea</taxon>
        <taxon>Rhabditidae</taxon>
        <taxon>Peloderinae</taxon>
        <taxon>Caenorhabditis</taxon>
    </lineage>
</organism>
<dbReference type="EC" id="4.6.1.2" evidence="1"/>
<dbReference type="EMBL" id="BX284604">
    <property type="protein sequence ID" value="CDX47497.1"/>
    <property type="molecule type" value="Genomic_DNA"/>
</dbReference>
<dbReference type="EMBL" id="BX284604">
    <property type="protein sequence ID" value="CDX47498.1"/>
    <property type="molecule type" value="Genomic_DNA"/>
</dbReference>
<dbReference type="RefSeq" id="NP_001294116.1">
    <molecule id="A0A078BQP2-1"/>
    <property type="nucleotide sequence ID" value="NM_001307187.2"/>
</dbReference>
<dbReference type="RefSeq" id="NP_001294117.1">
    <molecule id="A0A078BQP2-2"/>
    <property type="nucleotide sequence ID" value="NM_001307188.3"/>
</dbReference>
<dbReference type="SMR" id="A0A078BQP2"/>
<dbReference type="FunCoup" id="A0A078BQP2">
    <property type="interactions" value="112"/>
</dbReference>
<dbReference type="STRING" id="6239.Y105C5B.2a.1"/>
<dbReference type="GlyCosmos" id="A0A078BQP2">
    <property type="glycosylation" value="5 sites, No reported glycans"/>
</dbReference>
<dbReference type="PaxDb" id="6239-Y105C5B.2"/>
<dbReference type="EnsemblMetazoa" id="Y105C5B.2a.1">
    <molecule id="A0A078BQP2-1"/>
    <property type="protein sequence ID" value="Y105C5B.2a.1"/>
    <property type="gene ID" value="WBGene00001549"/>
</dbReference>
<dbReference type="EnsemblMetazoa" id="Y105C5B.2b.1">
    <molecule id="A0A078BQP2-2"/>
    <property type="protein sequence ID" value="Y105C5B.2b.1"/>
    <property type="gene ID" value="WBGene00001549"/>
</dbReference>
<dbReference type="GeneID" id="191653"/>
<dbReference type="KEGG" id="cel:CELE_Y105C5B.2"/>
<dbReference type="AGR" id="WB:WBGene00001549"/>
<dbReference type="CTD" id="191653"/>
<dbReference type="WormBase" id="Y105C5B.2a">
    <molecule id="A0A078BQP2-1"/>
    <property type="protein sequence ID" value="CE50061"/>
    <property type="gene ID" value="WBGene00001549"/>
    <property type="gene designation" value="gcy-25"/>
</dbReference>
<dbReference type="WormBase" id="Y105C5B.2b">
    <molecule id="A0A078BQP2-2"/>
    <property type="protein sequence ID" value="CE50104"/>
    <property type="gene ID" value="WBGene00001549"/>
    <property type="gene designation" value="gcy-25"/>
</dbReference>
<dbReference type="eggNOG" id="KOG1023">
    <property type="taxonomic scope" value="Eukaryota"/>
</dbReference>
<dbReference type="InParanoid" id="A0A078BQP2"/>
<dbReference type="OMA" id="LALRWHK"/>
<dbReference type="OrthoDB" id="5862383at2759"/>
<dbReference type="Reactome" id="R-CEL-2514859">
    <property type="pathway name" value="Inactivation, recovery and regulation of the phototransduction cascade"/>
</dbReference>
<dbReference type="PRO" id="PR:A0A078BQP2"/>
<dbReference type="Proteomes" id="UP000001940">
    <property type="component" value="Chromosome IV"/>
</dbReference>
<dbReference type="Bgee" id="WBGene00001549">
    <property type="expression patterns" value="Expressed in larva"/>
</dbReference>
<dbReference type="GO" id="GO:0005886">
    <property type="term" value="C:plasma membrane"/>
    <property type="evidence" value="ECO:0000318"/>
    <property type="project" value="GO_Central"/>
</dbReference>
<dbReference type="GO" id="GO:0005524">
    <property type="term" value="F:ATP binding"/>
    <property type="evidence" value="ECO:0007669"/>
    <property type="project" value="UniProtKB-KW"/>
</dbReference>
<dbReference type="GO" id="GO:0005525">
    <property type="term" value="F:GTP binding"/>
    <property type="evidence" value="ECO:0007669"/>
    <property type="project" value="UniProtKB-KW"/>
</dbReference>
<dbReference type="GO" id="GO:0004383">
    <property type="term" value="F:guanylate cyclase activity"/>
    <property type="evidence" value="ECO:0000318"/>
    <property type="project" value="GO_Central"/>
</dbReference>
<dbReference type="GO" id="GO:0001653">
    <property type="term" value="F:peptide receptor activity"/>
    <property type="evidence" value="ECO:0000318"/>
    <property type="project" value="GO_Central"/>
</dbReference>
<dbReference type="GO" id="GO:0004672">
    <property type="term" value="F:protein kinase activity"/>
    <property type="evidence" value="ECO:0007669"/>
    <property type="project" value="InterPro"/>
</dbReference>
<dbReference type="GO" id="GO:0006182">
    <property type="term" value="P:cGMP biosynthetic process"/>
    <property type="evidence" value="ECO:0000318"/>
    <property type="project" value="GO_Central"/>
</dbReference>
<dbReference type="GO" id="GO:0035556">
    <property type="term" value="P:intracellular signal transduction"/>
    <property type="evidence" value="ECO:0007669"/>
    <property type="project" value="InterPro"/>
</dbReference>
<dbReference type="GO" id="GO:0007168">
    <property type="term" value="P:receptor guanylyl cyclase signaling pathway"/>
    <property type="evidence" value="ECO:0000318"/>
    <property type="project" value="GO_Central"/>
</dbReference>
<dbReference type="CDD" id="cd07302">
    <property type="entry name" value="CHD"/>
    <property type="match status" value="1"/>
</dbReference>
<dbReference type="CDD" id="cd06352">
    <property type="entry name" value="PBP1_NPR_GC-like"/>
    <property type="match status" value="1"/>
</dbReference>
<dbReference type="FunFam" id="3.30.70.1230:FF:000106">
    <property type="entry name" value="Guanylate cyclase"/>
    <property type="match status" value="1"/>
</dbReference>
<dbReference type="Gene3D" id="3.40.50.2300">
    <property type="match status" value="1"/>
</dbReference>
<dbReference type="Gene3D" id="3.30.70.1230">
    <property type="entry name" value="Nucleotide cyclase"/>
    <property type="match status" value="1"/>
</dbReference>
<dbReference type="Gene3D" id="1.10.510.10">
    <property type="entry name" value="Transferase(Phosphotransferase) domain 1"/>
    <property type="match status" value="1"/>
</dbReference>
<dbReference type="InterPro" id="IPR001054">
    <property type="entry name" value="A/G_cyclase"/>
</dbReference>
<dbReference type="InterPro" id="IPR001828">
    <property type="entry name" value="ANF_lig-bd_rcpt"/>
</dbReference>
<dbReference type="InterPro" id="IPR050401">
    <property type="entry name" value="Cyclic_nucleotide_synthase"/>
</dbReference>
<dbReference type="InterPro" id="IPR011009">
    <property type="entry name" value="Kinase-like_dom_sf"/>
</dbReference>
<dbReference type="InterPro" id="IPR029787">
    <property type="entry name" value="Nucleotide_cyclase"/>
</dbReference>
<dbReference type="InterPro" id="IPR028082">
    <property type="entry name" value="Peripla_BP_I"/>
</dbReference>
<dbReference type="InterPro" id="IPR000719">
    <property type="entry name" value="Prot_kinase_dom"/>
</dbReference>
<dbReference type="InterPro" id="IPR001245">
    <property type="entry name" value="Ser-Thr/Tyr_kinase_cat_dom"/>
</dbReference>
<dbReference type="PANTHER" id="PTHR11920">
    <property type="entry name" value="GUANYLYL CYCLASE"/>
    <property type="match status" value="1"/>
</dbReference>
<dbReference type="PANTHER" id="PTHR11920:SF255">
    <property type="entry name" value="RECEPTOR-TYPE GUANYLATE CYCLASE GCY-25"/>
    <property type="match status" value="1"/>
</dbReference>
<dbReference type="Pfam" id="PF01094">
    <property type="entry name" value="ANF_receptor"/>
    <property type="match status" value="1"/>
</dbReference>
<dbReference type="Pfam" id="PF00211">
    <property type="entry name" value="Guanylate_cyc"/>
    <property type="match status" value="1"/>
</dbReference>
<dbReference type="Pfam" id="PF07714">
    <property type="entry name" value="PK_Tyr_Ser-Thr"/>
    <property type="match status" value="1"/>
</dbReference>
<dbReference type="SMART" id="SM00044">
    <property type="entry name" value="CYCc"/>
    <property type="match status" value="1"/>
</dbReference>
<dbReference type="SMART" id="SM00220">
    <property type="entry name" value="S_TKc"/>
    <property type="match status" value="1"/>
</dbReference>
<dbReference type="SUPFAM" id="SSF55073">
    <property type="entry name" value="Nucleotide cyclase"/>
    <property type="match status" value="1"/>
</dbReference>
<dbReference type="SUPFAM" id="SSF53822">
    <property type="entry name" value="Periplasmic binding protein-like I"/>
    <property type="match status" value="1"/>
</dbReference>
<dbReference type="SUPFAM" id="SSF56112">
    <property type="entry name" value="Protein kinase-like (PK-like)"/>
    <property type="match status" value="1"/>
</dbReference>
<dbReference type="PROSITE" id="PS50125">
    <property type="entry name" value="GUANYLATE_CYCLASE_2"/>
    <property type="match status" value="1"/>
</dbReference>
<dbReference type="PROSITE" id="PS50011">
    <property type="entry name" value="PROTEIN_KINASE_DOM"/>
    <property type="match status" value="1"/>
</dbReference>
<keyword id="KW-0025">Alternative splicing</keyword>
<keyword id="KW-0067">ATP-binding</keyword>
<keyword id="KW-1003">Cell membrane</keyword>
<keyword id="KW-0141">cGMP biosynthesis</keyword>
<keyword id="KW-0175">Coiled coil</keyword>
<keyword id="KW-0325">Glycoprotein</keyword>
<keyword id="KW-0342">GTP-binding</keyword>
<keyword id="KW-0456">Lyase</keyword>
<keyword id="KW-0472">Membrane</keyword>
<keyword id="KW-0547">Nucleotide-binding</keyword>
<keyword id="KW-0675">Receptor</keyword>
<keyword id="KW-1185">Reference proteome</keyword>
<keyword id="KW-0732">Signal</keyword>
<keyword id="KW-0812">Transmembrane</keyword>
<keyword id="KW-1133">Transmembrane helix</keyword>
<sequence>MLLLLLLLKISTFVDSFQIGHLEFENSNETRILEICMKNAGSWRDHRLISLPSCHNFNGLENAANLNYQYSVDLLIGAACDEETQTVSRLALRWHKLYLSSAPLSTKEKESTTIALKPHSLAGTAEVILAMCKSMKWKEIGIIYSEETKYTAHAIYDMLAEQEDDLKINVFLETDGLSNTYTILHSARALISFLTTLDLSKFFKTLKENAFRPLEFSIVHVDCNKSEISNFYTYLDNNAGEEPNPISAARLRKLYRHVALLKNSHDDMEKTEEFAKKYGLVPSYTLYKALILCDGLQLLNNYTAPRGNLSIVQQLPYLWNHVTNTETQGYSGPVFIGNDGVRLPYYEMHMWRDGKAVHVANVKPRESDYCGGNMTKNCYEFLPSSPLLEDLPPYTSDCGYDNNLCSDFHVFMIAAIVFSILLIPMAIAFYLQRKEHLIQQMPWRVPLDSISFDDNGGSLSASRRVSTISTARASYSSIFSGNVAEHAIVNKQKVSVKRHVQRRAITFSRQEMEMLNQLKYMSHTNINPFTGICFNQGSELIVMWQFTTRYSLEDLIFVKEQKFGRNFQSTFIKHIVHGINYIHNSSIKVHGALYLSNCVVDSYWVVKLTDFGIKGILKERTNHKELAPSSAFDVDAIHYKYLQLAPEHISAILEKLEEPRGTVEGDIYQLAMCIYQILFYMRPFAERQESIKELAHLLSSQSTAPLHPKVPEGNSFTMRLLSIIQQCWLYKPAARPALIKITDAVNREFGQDVKGTLIDQMIEMIDEYSANLEQIVAERTRELEQDMSVTENLLYQLLPKSVADSIRSGKTVVPEQHSSVTLLVVDVCQFTKFCEAFIPVHILETLQELYSSFDNIVQKNKAFKVENVGDAYLICSGIPEMSGFRHLREICKISLKLQAFMKTFKVRHRPSHTLQIKMGITSGAVAAGILGSTAPRFCIFGDTVNMACRMASTGNPGSIQLSELTANTLMEKFPSFMLEERGMIDVKGKGACLTFWLTGEKDIMRRQSSRSSCISQIKFELDEADNSKKMFLNV</sequence>
<name>GCY25_CAEEL</name>
<comment type="function">
    <text evidence="1">Guanylate cyclase involved in the production of the second messenger cGMP (By similarity).</text>
</comment>
<comment type="catalytic activity">
    <reaction evidence="1">
        <text>GTP = 3',5'-cyclic GMP + diphosphate</text>
        <dbReference type="Rhea" id="RHEA:13665"/>
        <dbReference type="ChEBI" id="CHEBI:33019"/>
        <dbReference type="ChEBI" id="CHEBI:37565"/>
        <dbReference type="ChEBI" id="CHEBI:57746"/>
        <dbReference type="EC" id="4.6.1.2"/>
    </reaction>
</comment>
<comment type="subcellular location">
    <subcellularLocation>
        <location evidence="7">Cell membrane</location>
        <topology evidence="7">Single-pass type I membrane protein</topology>
    </subcellularLocation>
</comment>
<comment type="alternative products">
    <event type="alternative splicing"/>
    <isoform>
        <id>A0A078BQP2-1</id>
        <name evidence="9">a</name>
        <sequence type="displayed"/>
    </isoform>
    <isoform>
        <id>A0A078BQP2-2</id>
        <name evidence="10">b</name>
        <sequence type="described" ref="VSP_057708"/>
    </isoform>
</comment>
<comment type="tissue specificity">
    <text evidence="6">Expressed in AQR, PQR and URX sensory neurons.</text>
</comment>
<comment type="domain">
    <text evidence="4">The protein kinase domain is predicted to be catalytically inactive.</text>
</comment>
<comment type="similarity">
    <text evidence="3">Belongs to the adenylyl cyclase class-4/guanylyl cyclase family.</text>
</comment>
<accession>A0A078BQP2</accession>
<accession>A0A078BTN7</accession>
<gene>
    <name evidence="9" type="primary">gcy-25</name>
    <name evidence="9" type="ORF">Y105C5B.2</name>
</gene>
<evidence type="ECO:0000250" key="1">
    <source>
        <dbReference type="UniProtKB" id="Q19187"/>
    </source>
</evidence>
<evidence type="ECO:0000255" key="2"/>
<evidence type="ECO:0000255" key="3">
    <source>
        <dbReference type="PROSITE-ProRule" id="PRU00099"/>
    </source>
</evidence>
<evidence type="ECO:0000255" key="4">
    <source>
        <dbReference type="PROSITE-ProRule" id="PRU00159"/>
    </source>
</evidence>
<evidence type="ECO:0000255" key="5">
    <source>
        <dbReference type="PROSITE-ProRule" id="PRU00498"/>
    </source>
</evidence>
<evidence type="ECO:0000269" key="6">
    <source>
    </source>
</evidence>
<evidence type="ECO:0000305" key="7"/>
<evidence type="ECO:0000312" key="8">
    <source>
        <dbReference type="Proteomes" id="UP000001940"/>
    </source>
</evidence>
<evidence type="ECO:0000312" key="9">
    <source>
        <dbReference type="WormBase" id="Y105C5B.2a"/>
    </source>
</evidence>
<evidence type="ECO:0000312" key="10">
    <source>
        <dbReference type="WormBase" id="Y105C5B.2b"/>
    </source>
</evidence>